<feature type="chain" id="PRO_1000193199" description="S-adenosylmethionine decarboxylase beta chain" evidence="1">
    <location>
        <begin position="1"/>
        <end position="61"/>
    </location>
</feature>
<feature type="chain" id="PRO_1000193200" description="S-adenosylmethionine decarboxylase alpha chain" evidence="1">
    <location>
        <begin position="62"/>
        <end position="116"/>
    </location>
</feature>
<feature type="active site" description="Schiff-base intermediate with substrate; via pyruvic acid" evidence="1">
    <location>
        <position position="62"/>
    </location>
</feature>
<feature type="active site" description="Proton acceptor; for processing activity" evidence="1">
    <location>
        <position position="67"/>
    </location>
</feature>
<feature type="active site" description="Proton donor; for catalytic activity" evidence="1">
    <location>
        <position position="82"/>
    </location>
</feature>
<feature type="site" description="Cleavage (non-hydrolytic); by autolysis" evidence="1">
    <location>
        <begin position="61"/>
        <end position="62"/>
    </location>
</feature>
<feature type="modified residue" description="Pyruvic acid (Ser); by autocatalysis" evidence="1">
    <location>
        <position position="62"/>
    </location>
</feature>
<proteinExistence type="inferred from homology"/>
<evidence type="ECO:0000255" key="1">
    <source>
        <dbReference type="HAMAP-Rule" id="MF_00464"/>
    </source>
</evidence>
<comment type="function">
    <text evidence="1">Catalyzes the decarboxylation of S-adenosylmethionine to S-adenosylmethioninamine (dcAdoMet), the propylamine donor required for the synthesis of the polyamines spermine and spermidine from the diamine putrescine.</text>
</comment>
<comment type="catalytic activity">
    <reaction evidence="1">
        <text>S-adenosyl-L-methionine + H(+) = S-adenosyl 3-(methylsulfanyl)propylamine + CO2</text>
        <dbReference type="Rhea" id="RHEA:15981"/>
        <dbReference type="ChEBI" id="CHEBI:15378"/>
        <dbReference type="ChEBI" id="CHEBI:16526"/>
        <dbReference type="ChEBI" id="CHEBI:57443"/>
        <dbReference type="ChEBI" id="CHEBI:59789"/>
        <dbReference type="EC" id="4.1.1.50"/>
    </reaction>
</comment>
<comment type="cofactor">
    <cofactor evidence="1">
        <name>pyruvate</name>
        <dbReference type="ChEBI" id="CHEBI:15361"/>
    </cofactor>
    <text evidence="1">Binds 1 pyruvoyl group covalently per subunit.</text>
</comment>
<comment type="pathway">
    <text evidence="1">Amine and polyamine biosynthesis; S-adenosylmethioninamine biosynthesis; S-adenosylmethioninamine from S-adenosyl-L-methionine: step 1/1.</text>
</comment>
<comment type="subunit">
    <text evidence="1">Heterotetramer of two alpha and two beta chains arranged as a dimer of alpha/beta heterodimers.</text>
</comment>
<comment type="PTM">
    <text evidence="1">Is synthesized initially as an inactive proenzyme. Formation of the active enzyme involves a self-maturation process in which the active site pyruvoyl group is generated from an internal serine residue via an autocatalytic post-translational modification. Two non-identical subunits are generated from the proenzyme in this reaction, and the pyruvate is formed at the N-terminus of the alpha chain, which is derived from the carboxyl end of the proenzyme. The post-translation cleavage follows an unusual pathway, termed non-hydrolytic serinolysis, in which the side chain hydroxyl group of the serine supplies its oxygen atom to form the C-terminus of the beta chain, while the remainder of the serine residue undergoes an oxidative deamination to produce ammonia and the pyruvoyl group blocking the N-terminus of the alpha chain.</text>
</comment>
<comment type="similarity">
    <text evidence="1">Belongs to the prokaryotic AdoMetDC family. Type 1 subfamily.</text>
</comment>
<dbReference type="EC" id="4.1.1.50" evidence="1"/>
<dbReference type="EMBL" id="CP001275">
    <property type="protein sequence ID" value="ACM05212.1"/>
    <property type="molecule type" value="Genomic_DNA"/>
</dbReference>
<dbReference type="SMR" id="B9KXN0"/>
<dbReference type="STRING" id="309801.trd_0217"/>
<dbReference type="KEGG" id="tro:trd_0217"/>
<dbReference type="eggNOG" id="COG1586">
    <property type="taxonomic scope" value="Bacteria"/>
</dbReference>
<dbReference type="HOGENOM" id="CLU_125470_2_3_0"/>
<dbReference type="OrthoDB" id="9793120at2"/>
<dbReference type="UniPathway" id="UPA00331">
    <property type="reaction ID" value="UER00451"/>
</dbReference>
<dbReference type="Proteomes" id="UP000000447">
    <property type="component" value="Chromosome"/>
</dbReference>
<dbReference type="GO" id="GO:0005829">
    <property type="term" value="C:cytosol"/>
    <property type="evidence" value="ECO:0007669"/>
    <property type="project" value="TreeGrafter"/>
</dbReference>
<dbReference type="GO" id="GO:0004014">
    <property type="term" value="F:adenosylmethionine decarboxylase activity"/>
    <property type="evidence" value="ECO:0007669"/>
    <property type="project" value="UniProtKB-UniRule"/>
</dbReference>
<dbReference type="GO" id="GO:0008295">
    <property type="term" value="P:spermidine biosynthetic process"/>
    <property type="evidence" value="ECO:0007669"/>
    <property type="project" value="UniProtKB-UniRule"/>
</dbReference>
<dbReference type="Gene3D" id="3.30.160.750">
    <property type="match status" value="1"/>
</dbReference>
<dbReference type="Gene3D" id="3.30.360.110">
    <property type="entry name" value="S-adenosylmethionine decarboxylase domain"/>
    <property type="match status" value="1"/>
</dbReference>
<dbReference type="HAMAP" id="MF_00464">
    <property type="entry name" value="AdoMetDC_1"/>
    <property type="match status" value="1"/>
</dbReference>
<dbReference type="InterPro" id="IPR042286">
    <property type="entry name" value="AdoMetDC_C"/>
</dbReference>
<dbReference type="InterPro" id="IPR003826">
    <property type="entry name" value="AdoMetDC_fam_prok"/>
</dbReference>
<dbReference type="InterPro" id="IPR042284">
    <property type="entry name" value="AdoMetDC_N"/>
</dbReference>
<dbReference type="InterPro" id="IPR016067">
    <property type="entry name" value="S-AdoMet_deCO2ase_core"/>
</dbReference>
<dbReference type="InterPro" id="IPR017716">
    <property type="entry name" value="S-AdoMet_deCOase_pro-enz"/>
</dbReference>
<dbReference type="NCBIfam" id="TIGR03330">
    <property type="entry name" value="SAM_DCase_Bsu"/>
    <property type="match status" value="1"/>
</dbReference>
<dbReference type="PANTHER" id="PTHR33866">
    <property type="entry name" value="S-ADENOSYLMETHIONINE DECARBOXYLASE PROENZYME"/>
    <property type="match status" value="1"/>
</dbReference>
<dbReference type="PANTHER" id="PTHR33866:SF2">
    <property type="entry name" value="S-ADENOSYLMETHIONINE DECARBOXYLASE PROENZYME"/>
    <property type="match status" value="1"/>
</dbReference>
<dbReference type="Pfam" id="PF02675">
    <property type="entry name" value="AdoMet_dc"/>
    <property type="match status" value="1"/>
</dbReference>
<dbReference type="SUPFAM" id="SSF56276">
    <property type="entry name" value="S-adenosylmethionine decarboxylase"/>
    <property type="match status" value="1"/>
</dbReference>
<organism>
    <name type="scientific">Thermomicrobium roseum (strain ATCC 27502 / DSM 5159 / P-2)</name>
    <dbReference type="NCBI Taxonomy" id="309801"/>
    <lineage>
        <taxon>Bacteria</taxon>
        <taxon>Pseudomonadati</taxon>
        <taxon>Thermomicrobiota</taxon>
        <taxon>Thermomicrobia</taxon>
        <taxon>Thermomicrobiales</taxon>
        <taxon>Thermomicrobiaceae</taxon>
        <taxon>Thermomicrobium</taxon>
    </lineage>
</organism>
<sequence>MKSLGRHVIVELWGCQNIDSLQAVEEAIRDAVAATNATLRDLQVFPWEPYNGVSGIAILSESHLSIHTWPELGYAAVDVFTCGEHTNPEAAIPVLRERFRPQRMEVMQVSRGMIVD</sequence>
<protein>
    <recommendedName>
        <fullName evidence="1">S-adenosylmethionine decarboxylase proenzyme</fullName>
        <shortName evidence="1">AdoMetDC</shortName>
        <shortName evidence="1">SAMDC</shortName>
        <ecNumber evidence="1">4.1.1.50</ecNumber>
    </recommendedName>
    <component>
        <recommendedName>
            <fullName evidence="1">S-adenosylmethionine decarboxylase beta chain</fullName>
        </recommendedName>
    </component>
    <component>
        <recommendedName>
            <fullName evidence="1">S-adenosylmethionine decarboxylase alpha chain</fullName>
        </recommendedName>
    </component>
</protein>
<accession>B9KXN0</accession>
<reference key="1">
    <citation type="journal article" date="2009" name="PLoS ONE">
        <title>Complete genome sequence of the aerobic CO-oxidizing thermophile Thermomicrobium roseum.</title>
        <authorList>
            <person name="Wu D."/>
            <person name="Raymond J."/>
            <person name="Wu M."/>
            <person name="Chatterji S."/>
            <person name="Ren Q."/>
            <person name="Graham J.E."/>
            <person name="Bryant D.A."/>
            <person name="Robb F."/>
            <person name="Colman A."/>
            <person name="Tallon L.J."/>
            <person name="Badger J.H."/>
            <person name="Madupu R."/>
            <person name="Ward N.L."/>
            <person name="Eisen J.A."/>
        </authorList>
    </citation>
    <scope>NUCLEOTIDE SEQUENCE [LARGE SCALE GENOMIC DNA]</scope>
    <source>
        <strain>ATCC 27502 / DSM 5159 / P-2</strain>
    </source>
</reference>
<keyword id="KW-0068">Autocatalytic cleavage</keyword>
<keyword id="KW-0210">Decarboxylase</keyword>
<keyword id="KW-0456">Lyase</keyword>
<keyword id="KW-0620">Polyamine biosynthesis</keyword>
<keyword id="KW-0670">Pyruvate</keyword>
<keyword id="KW-1185">Reference proteome</keyword>
<keyword id="KW-0949">S-adenosyl-L-methionine</keyword>
<keyword id="KW-0704">Schiff base</keyword>
<keyword id="KW-0745">Spermidine biosynthesis</keyword>
<keyword id="KW-0865">Zymogen</keyword>
<name>SPEH_THERP</name>
<gene>
    <name evidence="1" type="primary">speH</name>
    <name type="ordered locus">trd_0217</name>
</gene>